<name>TO1B_ATRRO</name>
<dbReference type="EMBL" id="EF523495">
    <property type="protein sequence ID" value="ABP63654.1"/>
    <property type="molecule type" value="mRNA"/>
</dbReference>
<dbReference type="SMR" id="A5A3H1"/>
<dbReference type="ArachnoServer" id="AS000021">
    <property type="toxin name" value="omega-hexatoxin-Ar1b"/>
</dbReference>
<dbReference type="GO" id="GO:0005576">
    <property type="term" value="C:extracellular region"/>
    <property type="evidence" value="ECO:0007669"/>
    <property type="project" value="UniProtKB-SubCell"/>
</dbReference>
<dbReference type="GO" id="GO:0019855">
    <property type="term" value="F:calcium channel inhibitor activity"/>
    <property type="evidence" value="ECO:0007669"/>
    <property type="project" value="InterPro"/>
</dbReference>
<dbReference type="GO" id="GO:0017080">
    <property type="term" value="F:sodium channel regulator activity"/>
    <property type="evidence" value="ECO:0007669"/>
    <property type="project" value="UniProtKB-KW"/>
</dbReference>
<dbReference type="GO" id="GO:0090729">
    <property type="term" value="F:toxin activity"/>
    <property type="evidence" value="ECO:0007669"/>
    <property type="project" value="UniProtKB-KW"/>
</dbReference>
<dbReference type="GO" id="GO:0006952">
    <property type="term" value="P:defense response"/>
    <property type="evidence" value="ECO:0007669"/>
    <property type="project" value="InterPro"/>
</dbReference>
<dbReference type="InterPro" id="IPR009415">
    <property type="entry name" value="Omega-atracotox"/>
</dbReference>
<dbReference type="Pfam" id="PF06357">
    <property type="entry name" value="Omega-toxin"/>
    <property type="match status" value="1"/>
</dbReference>
<dbReference type="SUPFAM" id="SSF57059">
    <property type="entry name" value="omega toxin-like"/>
    <property type="match status" value="1"/>
</dbReference>
<comment type="function">
    <text evidence="1">Insecticidal toxin that reversibly and voltage-independently blocks both mid-low- (M-LVA) and high-voltage-activated (HVA) calcium channels (Cav) in cockroach DUM neurons. Also causes a modest block of insect sodium channel currents (Nav). Induces potent excitatory symptoms, followed by flaccid paralysis leading to death in house crickets (By similarity).</text>
</comment>
<comment type="subcellular location">
    <subcellularLocation>
        <location evidence="1">Secreted</location>
    </subcellularLocation>
</comment>
<comment type="tissue specificity">
    <text>Expressed by the venom gland.</text>
</comment>
<comment type="domain">
    <text evidence="1">The presence of a 'disulfide through disulfide knot' structurally defines this protein as a knottin.</text>
</comment>
<comment type="miscellaneous">
    <text>This toxin comes from a female specimen. It is observed that propeptide sequences coming from female specimen have only limited homology with the male paralogs, but the reason is unknown.</text>
</comment>
<comment type="similarity">
    <text evidence="4">Belongs to the neurotoxin 08 (Shiva) family. 01 (omega toxin) subfamily.</text>
</comment>
<keyword id="KW-0108">Calcium channel impairing toxin</keyword>
<keyword id="KW-0165">Cleavage on pair of basic residues</keyword>
<keyword id="KW-1015">Disulfide bond</keyword>
<keyword id="KW-0872">Ion channel impairing toxin</keyword>
<keyword id="KW-0960">Knottin</keyword>
<keyword id="KW-0528">Neurotoxin</keyword>
<keyword id="KW-0964">Secreted</keyword>
<keyword id="KW-0732">Signal</keyword>
<keyword id="KW-0800">Toxin</keyword>
<keyword id="KW-1218">Voltage-gated calcium channel impairing toxin</keyword>
<keyword id="KW-0738">Voltage-gated sodium channel impairing toxin</keyword>
<reference key="1">
    <citation type="journal article" date="2007" name="Biochem. Pharmacol.">
        <title>The omega-atracotoxins: selective blockers of insect M-LVA and HVA calcium channels.</title>
        <authorList>
            <person name="Chong Y."/>
            <person name="Hayes J.L."/>
            <person name="Sollod B."/>
            <person name="Wen S."/>
            <person name="Wilson D.T."/>
            <person name="Hains P.G."/>
            <person name="Hodgson W.C."/>
            <person name="Broady K.W."/>
            <person name="King G.F."/>
            <person name="Nicholson G.M."/>
        </authorList>
    </citation>
    <scope>NUCLEOTIDE SEQUENCE [MRNA]</scope>
    <source>
        <strain>XenFW208</strain>
        <tissue>Venom gland</tissue>
    </source>
</reference>
<evidence type="ECO:0000250" key="1"/>
<evidence type="ECO:0000250" key="2">
    <source>
        <dbReference type="UniProtKB" id="P56207"/>
    </source>
</evidence>
<evidence type="ECO:0000255" key="3"/>
<evidence type="ECO:0000305" key="4"/>
<sequence>MNTATGFIVLLVLATVLGCIEAGESHVREDAMGRARRGACTPTGQPCPYNESCCSGSCQEQLNENGHTVKRCV</sequence>
<feature type="signal peptide" evidence="3">
    <location>
        <begin position="1"/>
        <end position="22"/>
    </location>
</feature>
<feature type="propeptide" id="PRO_0000379908" evidence="1">
    <location>
        <begin position="23"/>
        <end position="37"/>
    </location>
</feature>
<feature type="peptide" id="PRO_0000379909" description="Omega-hexatoxin-Ar1b">
    <location>
        <begin position="38"/>
        <end position="73"/>
    </location>
</feature>
<feature type="site" description="Critical for insecticidal activity" evidence="2">
    <location>
        <position position="46"/>
    </location>
</feature>
<feature type="site" description="Critical for insecticidal activity" evidence="2">
    <location>
        <position position="63"/>
    </location>
</feature>
<feature type="site" description="Critical for insecticidal activity" evidence="2">
    <location>
        <position position="71"/>
    </location>
</feature>
<feature type="disulfide bond" evidence="2">
    <location>
        <begin position="40"/>
        <end position="54"/>
    </location>
</feature>
<feature type="disulfide bond" evidence="2">
    <location>
        <begin position="47"/>
        <end position="58"/>
    </location>
</feature>
<feature type="disulfide bond" evidence="2">
    <location>
        <begin position="53"/>
        <end position="72"/>
    </location>
</feature>
<accession>A5A3H1</accession>
<proteinExistence type="evidence at transcript level"/>
<protein>
    <recommendedName>
        <fullName>Omega-hexatoxin-Ar1b</fullName>
        <shortName>Omega-HXTX-Ar1b</shortName>
    </recommendedName>
    <alternativeName>
        <fullName>Omega-atracotoxin-Ar1b</fullName>
        <shortName>Omega-ACTX-Ar1b</shortName>
    </alternativeName>
</protein>
<organism>
    <name type="scientific">Atrax robustus</name>
    <name type="common">Sydney funnel-web spider</name>
    <dbReference type="NCBI Taxonomy" id="6903"/>
    <lineage>
        <taxon>Eukaryota</taxon>
        <taxon>Metazoa</taxon>
        <taxon>Ecdysozoa</taxon>
        <taxon>Arthropoda</taxon>
        <taxon>Chelicerata</taxon>
        <taxon>Arachnida</taxon>
        <taxon>Araneae</taxon>
        <taxon>Mygalomorphae</taxon>
        <taxon>Hexathelidae</taxon>
        <taxon>Atrax</taxon>
    </lineage>
</organism>